<reference key="1">
    <citation type="submission" date="2008-02" db="EMBL/GenBank/DDBJ databases">
        <title>Complete sequence of Shewanella woodyi ATCC 51908.</title>
        <authorList>
            <consortium name="US DOE Joint Genome Institute"/>
            <person name="Copeland A."/>
            <person name="Lucas S."/>
            <person name="Lapidus A."/>
            <person name="Glavina del Rio T."/>
            <person name="Dalin E."/>
            <person name="Tice H."/>
            <person name="Bruce D."/>
            <person name="Goodwin L."/>
            <person name="Pitluck S."/>
            <person name="Sims D."/>
            <person name="Brettin T."/>
            <person name="Detter J.C."/>
            <person name="Han C."/>
            <person name="Kuske C.R."/>
            <person name="Schmutz J."/>
            <person name="Larimer F."/>
            <person name="Land M."/>
            <person name="Hauser L."/>
            <person name="Kyrpides N."/>
            <person name="Lykidis A."/>
            <person name="Zhao J.-S."/>
            <person name="Richardson P."/>
        </authorList>
    </citation>
    <scope>NUCLEOTIDE SEQUENCE [LARGE SCALE GENOMIC DNA]</scope>
    <source>
        <strain>ATCC 51908 / MS32</strain>
    </source>
</reference>
<gene>
    <name evidence="1" type="primary">aroQ</name>
    <name type="ordered locus">Swoo_0546</name>
</gene>
<dbReference type="EC" id="4.2.1.10" evidence="1"/>
<dbReference type="EMBL" id="CP000961">
    <property type="protein sequence ID" value="ACA84842.1"/>
    <property type="molecule type" value="Genomic_DNA"/>
</dbReference>
<dbReference type="RefSeq" id="WP_012323190.1">
    <property type="nucleotide sequence ID" value="NC_010506.1"/>
</dbReference>
<dbReference type="SMR" id="B1KR25"/>
<dbReference type="STRING" id="392500.Swoo_0546"/>
<dbReference type="KEGG" id="swd:Swoo_0546"/>
<dbReference type="eggNOG" id="COG0757">
    <property type="taxonomic scope" value="Bacteria"/>
</dbReference>
<dbReference type="HOGENOM" id="CLU_090968_1_0_6"/>
<dbReference type="UniPathway" id="UPA00053">
    <property type="reaction ID" value="UER00086"/>
</dbReference>
<dbReference type="Proteomes" id="UP000002168">
    <property type="component" value="Chromosome"/>
</dbReference>
<dbReference type="GO" id="GO:0003855">
    <property type="term" value="F:3-dehydroquinate dehydratase activity"/>
    <property type="evidence" value="ECO:0007669"/>
    <property type="project" value="UniProtKB-UniRule"/>
</dbReference>
<dbReference type="GO" id="GO:0008652">
    <property type="term" value="P:amino acid biosynthetic process"/>
    <property type="evidence" value="ECO:0007669"/>
    <property type="project" value="UniProtKB-KW"/>
</dbReference>
<dbReference type="GO" id="GO:0009073">
    <property type="term" value="P:aromatic amino acid family biosynthetic process"/>
    <property type="evidence" value="ECO:0007669"/>
    <property type="project" value="UniProtKB-KW"/>
</dbReference>
<dbReference type="GO" id="GO:0009423">
    <property type="term" value="P:chorismate biosynthetic process"/>
    <property type="evidence" value="ECO:0007669"/>
    <property type="project" value="UniProtKB-UniRule"/>
</dbReference>
<dbReference type="GO" id="GO:0019631">
    <property type="term" value="P:quinate catabolic process"/>
    <property type="evidence" value="ECO:0007669"/>
    <property type="project" value="TreeGrafter"/>
</dbReference>
<dbReference type="CDD" id="cd00466">
    <property type="entry name" value="DHQase_II"/>
    <property type="match status" value="1"/>
</dbReference>
<dbReference type="Gene3D" id="3.40.50.9100">
    <property type="entry name" value="Dehydroquinase, class II"/>
    <property type="match status" value="1"/>
</dbReference>
<dbReference type="HAMAP" id="MF_00169">
    <property type="entry name" value="AroQ"/>
    <property type="match status" value="1"/>
</dbReference>
<dbReference type="InterPro" id="IPR001874">
    <property type="entry name" value="DHquinase_II"/>
</dbReference>
<dbReference type="InterPro" id="IPR018509">
    <property type="entry name" value="DHquinase_II_CS"/>
</dbReference>
<dbReference type="InterPro" id="IPR036441">
    <property type="entry name" value="DHquinase_II_sf"/>
</dbReference>
<dbReference type="NCBIfam" id="TIGR01088">
    <property type="entry name" value="aroQ"/>
    <property type="match status" value="1"/>
</dbReference>
<dbReference type="NCBIfam" id="NF003804">
    <property type="entry name" value="PRK05395.1-1"/>
    <property type="match status" value="1"/>
</dbReference>
<dbReference type="NCBIfam" id="NF003805">
    <property type="entry name" value="PRK05395.1-2"/>
    <property type="match status" value="1"/>
</dbReference>
<dbReference type="NCBIfam" id="NF003806">
    <property type="entry name" value="PRK05395.1-3"/>
    <property type="match status" value="1"/>
</dbReference>
<dbReference type="NCBIfam" id="NF003807">
    <property type="entry name" value="PRK05395.1-4"/>
    <property type="match status" value="1"/>
</dbReference>
<dbReference type="PANTHER" id="PTHR21272">
    <property type="entry name" value="CATABOLIC 3-DEHYDROQUINASE"/>
    <property type="match status" value="1"/>
</dbReference>
<dbReference type="PANTHER" id="PTHR21272:SF3">
    <property type="entry name" value="CATABOLIC 3-DEHYDROQUINASE"/>
    <property type="match status" value="1"/>
</dbReference>
<dbReference type="Pfam" id="PF01220">
    <property type="entry name" value="DHquinase_II"/>
    <property type="match status" value="1"/>
</dbReference>
<dbReference type="PIRSF" id="PIRSF001399">
    <property type="entry name" value="DHquinase_II"/>
    <property type="match status" value="1"/>
</dbReference>
<dbReference type="SUPFAM" id="SSF52304">
    <property type="entry name" value="Type II 3-dehydroquinate dehydratase"/>
    <property type="match status" value="1"/>
</dbReference>
<dbReference type="PROSITE" id="PS01029">
    <property type="entry name" value="DEHYDROQUINASE_II"/>
    <property type="match status" value="1"/>
</dbReference>
<comment type="function">
    <text evidence="1">Catalyzes a trans-dehydration via an enolate intermediate.</text>
</comment>
<comment type="catalytic activity">
    <reaction evidence="1">
        <text>3-dehydroquinate = 3-dehydroshikimate + H2O</text>
        <dbReference type="Rhea" id="RHEA:21096"/>
        <dbReference type="ChEBI" id="CHEBI:15377"/>
        <dbReference type="ChEBI" id="CHEBI:16630"/>
        <dbReference type="ChEBI" id="CHEBI:32364"/>
        <dbReference type="EC" id="4.2.1.10"/>
    </reaction>
</comment>
<comment type="pathway">
    <text evidence="1">Metabolic intermediate biosynthesis; chorismate biosynthesis; chorismate from D-erythrose 4-phosphate and phosphoenolpyruvate: step 3/7.</text>
</comment>
<comment type="subunit">
    <text evidence="1">Homododecamer.</text>
</comment>
<comment type="similarity">
    <text evidence="1">Belongs to the type-II 3-dehydroquinase family.</text>
</comment>
<proteinExistence type="inferred from homology"/>
<sequence length="149" mass="16163">MSAKAKILLVNGPNLNLLGRREPGHYGHHTLDSIVQNMKNTANSADVELEHIQSNAEHELIDAIHSTDANFIIINPAAFTHTSVAIRDAILGVAIPFIEVHLSNVHAREPFRHHSYFSDKAVGVICGLGADGYQFALKSAINRLQGPSA</sequence>
<feature type="chain" id="PRO_1000097624" description="3-dehydroquinate dehydratase">
    <location>
        <begin position="1"/>
        <end position="149"/>
    </location>
</feature>
<feature type="active site" description="Proton acceptor" evidence="1">
    <location>
        <position position="26"/>
    </location>
</feature>
<feature type="active site" description="Proton donor" evidence="1">
    <location>
        <position position="101"/>
    </location>
</feature>
<feature type="binding site" evidence="1">
    <location>
        <position position="75"/>
    </location>
    <ligand>
        <name>substrate</name>
    </ligand>
</feature>
<feature type="binding site" evidence="1">
    <location>
        <position position="81"/>
    </location>
    <ligand>
        <name>substrate</name>
    </ligand>
</feature>
<feature type="binding site" evidence="1">
    <location>
        <position position="88"/>
    </location>
    <ligand>
        <name>substrate</name>
    </ligand>
</feature>
<feature type="binding site" evidence="1">
    <location>
        <begin position="102"/>
        <end position="103"/>
    </location>
    <ligand>
        <name>substrate</name>
    </ligand>
</feature>
<feature type="binding site" evidence="1">
    <location>
        <position position="112"/>
    </location>
    <ligand>
        <name>substrate</name>
    </ligand>
</feature>
<feature type="site" description="Transition state stabilizer" evidence="1">
    <location>
        <position position="21"/>
    </location>
</feature>
<keyword id="KW-0028">Amino-acid biosynthesis</keyword>
<keyword id="KW-0057">Aromatic amino acid biosynthesis</keyword>
<keyword id="KW-0456">Lyase</keyword>
<keyword id="KW-1185">Reference proteome</keyword>
<organism>
    <name type="scientific">Shewanella woodyi (strain ATCC 51908 / MS32)</name>
    <dbReference type="NCBI Taxonomy" id="392500"/>
    <lineage>
        <taxon>Bacteria</taxon>
        <taxon>Pseudomonadati</taxon>
        <taxon>Pseudomonadota</taxon>
        <taxon>Gammaproteobacteria</taxon>
        <taxon>Alteromonadales</taxon>
        <taxon>Shewanellaceae</taxon>
        <taxon>Shewanella</taxon>
    </lineage>
</organism>
<evidence type="ECO:0000255" key="1">
    <source>
        <dbReference type="HAMAP-Rule" id="MF_00169"/>
    </source>
</evidence>
<name>AROQ_SHEWM</name>
<protein>
    <recommendedName>
        <fullName evidence="1">3-dehydroquinate dehydratase</fullName>
        <shortName evidence="1">3-dehydroquinase</shortName>
        <ecNumber evidence="1">4.2.1.10</ecNumber>
    </recommendedName>
    <alternativeName>
        <fullName evidence="1">Type II DHQase</fullName>
    </alternativeName>
</protein>
<accession>B1KR25</accession>